<proteinExistence type="inferred from homology"/>
<dbReference type="EC" id="6.3.5.3" evidence="1"/>
<dbReference type="EMBL" id="BX897699">
    <property type="protein sequence ID" value="CAF27767.1"/>
    <property type="molecule type" value="Genomic_DNA"/>
</dbReference>
<dbReference type="RefSeq" id="WP_011180845.1">
    <property type="nucleotide sequence ID" value="NZ_LRIJ02000001.1"/>
</dbReference>
<dbReference type="SMR" id="Q6G335"/>
<dbReference type="PaxDb" id="283166-BH09740"/>
<dbReference type="EnsemblBacteria" id="CAF27767">
    <property type="protein sequence ID" value="CAF27767"/>
    <property type="gene ID" value="BH09740"/>
</dbReference>
<dbReference type="GeneID" id="92985335"/>
<dbReference type="KEGG" id="bhe:BH09740"/>
<dbReference type="eggNOG" id="COG0046">
    <property type="taxonomic scope" value="Bacteria"/>
</dbReference>
<dbReference type="OrthoDB" id="9804441at2"/>
<dbReference type="UniPathway" id="UPA00074">
    <property type="reaction ID" value="UER00128"/>
</dbReference>
<dbReference type="Proteomes" id="UP000000421">
    <property type="component" value="Chromosome"/>
</dbReference>
<dbReference type="GO" id="GO:0005737">
    <property type="term" value="C:cytoplasm"/>
    <property type="evidence" value="ECO:0007669"/>
    <property type="project" value="UniProtKB-SubCell"/>
</dbReference>
<dbReference type="GO" id="GO:0005524">
    <property type="term" value="F:ATP binding"/>
    <property type="evidence" value="ECO:0007669"/>
    <property type="project" value="UniProtKB-UniRule"/>
</dbReference>
<dbReference type="GO" id="GO:0000287">
    <property type="term" value="F:magnesium ion binding"/>
    <property type="evidence" value="ECO:0007669"/>
    <property type="project" value="UniProtKB-UniRule"/>
</dbReference>
<dbReference type="GO" id="GO:0004642">
    <property type="term" value="F:phosphoribosylformylglycinamidine synthase activity"/>
    <property type="evidence" value="ECO:0007669"/>
    <property type="project" value="UniProtKB-UniRule"/>
</dbReference>
<dbReference type="GO" id="GO:0006189">
    <property type="term" value="P:'de novo' IMP biosynthetic process"/>
    <property type="evidence" value="ECO:0007669"/>
    <property type="project" value="UniProtKB-UniRule"/>
</dbReference>
<dbReference type="CDD" id="cd02203">
    <property type="entry name" value="PurL_repeat1"/>
    <property type="match status" value="1"/>
</dbReference>
<dbReference type="CDD" id="cd02204">
    <property type="entry name" value="PurL_repeat2"/>
    <property type="match status" value="1"/>
</dbReference>
<dbReference type="FunFam" id="3.30.1330.10:FF:000004">
    <property type="entry name" value="Phosphoribosylformylglycinamidine synthase subunit PurL"/>
    <property type="match status" value="1"/>
</dbReference>
<dbReference type="Gene3D" id="3.90.650.10">
    <property type="entry name" value="PurM-like C-terminal domain"/>
    <property type="match status" value="2"/>
</dbReference>
<dbReference type="Gene3D" id="3.30.1330.10">
    <property type="entry name" value="PurM-like, N-terminal domain"/>
    <property type="match status" value="2"/>
</dbReference>
<dbReference type="HAMAP" id="MF_00420">
    <property type="entry name" value="PurL_2"/>
    <property type="match status" value="1"/>
</dbReference>
<dbReference type="InterPro" id="IPR010074">
    <property type="entry name" value="PRibForGlyAmidine_synth_PurL"/>
</dbReference>
<dbReference type="InterPro" id="IPR041609">
    <property type="entry name" value="PurL_linker"/>
</dbReference>
<dbReference type="InterPro" id="IPR010918">
    <property type="entry name" value="PurM-like_C_dom"/>
</dbReference>
<dbReference type="InterPro" id="IPR036676">
    <property type="entry name" value="PurM-like_C_sf"/>
</dbReference>
<dbReference type="InterPro" id="IPR016188">
    <property type="entry name" value="PurM-like_N"/>
</dbReference>
<dbReference type="InterPro" id="IPR036921">
    <property type="entry name" value="PurM-like_N_sf"/>
</dbReference>
<dbReference type="NCBIfam" id="TIGR01736">
    <property type="entry name" value="FGAM_synth_II"/>
    <property type="match status" value="1"/>
</dbReference>
<dbReference type="NCBIfam" id="NF002290">
    <property type="entry name" value="PRK01213.1"/>
    <property type="match status" value="1"/>
</dbReference>
<dbReference type="PANTHER" id="PTHR43555">
    <property type="entry name" value="PHOSPHORIBOSYLFORMYLGLYCINAMIDINE SYNTHASE SUBUNIT PURL"/>
    <property type="match status" value="1"/>
</dbReference>
<dbReference type="PANTHER" id="PTHR43555:SF1">
    <property type="entry name" value="PHOSPHORIBOSYLFORMYLGLYCINAMIDINE SYNTHASE SUBUNIT PURL"/>
    <property type="match status" value="1"/>
</dbReference>
<dbReference type="Pfam" id="PF00586">
    <property type="entry name" value="AIRS"/>
    <property type="match status" value="2"/>
</dbReference>
<dbReference type="Pfam" id="PF02769">
    <property type="entry name" value="AIRS_C"/>
    <property type="match status" value="2"/>
</dbReference>
<dbReference type="Pfam" id="PF18072">
    <property type="entry name" value="FGAR-AT_linker"/>
    <property type="match status" value="1"/>
</dbReference>
<dbReference type="PIRSF" id="PIRSF001587">
    <property type="entry name" value="FGAM_synthase_II"/>
    <property type="match status" value="1"/>
</dbReference>
<dbReference type="SUPFAM" id="SSF56042">
    <property type="entry name" value="PurM C-terminal domain-like"/>
    <property type="match status" value="2"/>
</dbReference>
<dbReference type="SUPFAM" id="SSF55326">
    <property type="entry name" value="PurM N-terminal domain-like"/>
    <property type="match status" value="2"/>
</dbReference>
<gene>
    <name evidence="1" type="primary">purL</name>
    <name type="ordered locus">BH09740</name>
</gene>
<reference key="1">
    <citation type="journal article" date="2004" name="Proc. Natl. Acad. Sci. U.S.A.">
        <title>The louse-borne human pathogen Bartonella quintana is a genomic derivative of the zoonotic agent Bartonella henselae.</title>
        <authorList>
            <person name="Alsmark U.C.M."/>
            <person name="Frank A.C."/>
            <person name="Karlberg E.O."/>
            <person name="Legault B.-A."/>
            <person name="Ardell D.H."/>
            <person name="Canbaeck B."/>
            <person name="Eriksson A.-S."/>
            <person name="Naeslund A.K."/>
            <person name="Handley S.A."/>
            <person name="Huvet M."/>
            <person name="La Scola B."/>
            <person name="Holmberg M."/>
            <person name="Andersson S.G.E."/>
        </authorList>
    </citation>
    <scope>NUCLEOTIDE SEQUENCE [LARGE SCALE GENOMIC DNA]</scope>
    <source>
        <strain>ATCC 49882 / DSM 28221 / CCUG 30454 / Houston 1</strain>
    </source>
</reference>
<comment type="function">
    <text evidence="1">Part of the phosphoribosylformylglycinamidine synthase complex involved in the purines biosynthetic pathway. Catalyzes the ATP-dependent conversion of formylglycinamide ribonucleotide (FGAR) and glutamine to yield formylglycinamidine ribonucleotide (FGAM) and glutamate. The FGAM synthase complex is composed of three subunits. PurQ produces an ammonia molecule by converting glutamine to glutamate. PurL transfers the ammonia molecule to FGAR to form FGAM in an ATP-dependent manner. PurS interacts with PurQ and PurL and is thought to assist in the transfer of the ammonia molecule from PurQ to PurL.</text>
</comment>
<comment type="catalytic activity">
    <reaction evidence="1">
        <text>N(2)-formyl-N(1)-(5-phospho-beta-D-ribosyl)glycinamide + L-glutamine + ATP + H2O = 2-formamido-N(1)-(5-O-phospho-beta-D-ribosyl)acetamidine + L-glutamate + ADP + phosphate + H(+)</text>
        <dbReference type="Rhea" id="RHEA:17129"/>
        <dbReference type="ChEBI" id="CHEBI:15377"/>
        <dbReference type="ChEBI" id="CHEBI:15378"/>
        <dbReference type="ChEBI" id="CHEBI:29985"/>
        <dbReference type="ChEBI" id="CHEBI:30616"/>
        <dbReference type="ChEBI" id="CHEBI:43474"/>
        <dbReference type="ChEBI" id="CHEBI:58359"/>
        <dbReference type="ChEBI" id="CHEBI:147286"/>
        <dbReference type="ChEBI" id="CHEBI:147287"/>
        <dbReference type="ChEBI" id="CHEBI:456216"/>
        <dbReference type="EC" id="6.3.5.3"/>
    </reaction>
</comment>
<comment type="pathway">
    <text evidence="1">Purine metabolism; IMP biosynthesis via de novo pathway; 5-amino-1-(5-phospho-D-ribosyl)imidazole from N(2)-formyl-N(1)-(5-phospho-D-ribosyl)glycinamide: step 1/2.</text>
</comment>
<comment type="subunit">
    <text evidence="1">Monomer. Part of the FGAM synthase complex composed of 1 PurL, 1 PurQ and 2 PurS subunits.</text>
</comment>
<comment type="subcellular location">
    <subcellularLocation>
        <location evidence="1">Cytoplasm</location>
    </subcellularLocation>
</comment>
<comment type="similarity">
    <text evidence="1">Belongs to the FGAMS family.</text>
</comment>
<organism>
    <name type="scientific">Bartonella henselae (strain ATCC 49882 / DSM 28221 / CCUG 30454 / Houston 1)</name>
    <name type="common">Rochalimaea henselae</name>
    <dbReference type="NCBI Taxonomy" id="283166"/>
    <lineage>
        <taxon>Bacteria</taxon>
        <taxon>Pseudomonadati</taxon>
        <taxon>Pseudomonadota</taxon>
        <taxon>Alphaproteobacteria</taxon>
        <taxon>Hyphomicrobiales</taxon>
        <taxon>Bartonellaceae</taxon>
        <taxon>Bartonella</taxon>
    </lineage>
</organism>
<name>PURL_BARHE</name>
<protein>
    <recommendedName>
        <fullName evidence="1">Phosphoribosylformylglycinamidine synthase subunit PurL</fullName>
        <shortName evidence="1">FGAM synthase</shortName>
        <ecNumber evidence="1">6.3.5.3</ecNumber>
    </recommendedName>
    <alternativeName>
        <fullName evidence="1">Formylglycinamide ribonucleotide amidotransferase subunit II</fullName>
        <shortName evidence="1">FGAR amidotransferase II</shortName>
        <shortName evidence="1">FGAR-AT II</shortName>
    </alternativeName>
    <alternativeName>
        <fullName evidence="1">Glutamine amidotransferase PurL</fullName>
    </alternativeName>
    <alternativeName>
        <fullName evidence="1">Phosphoribosylformylglycinamidine synthase subunit II</fullName>
    </alternativeName>
</protein>
<keyword id="KW-0067">ATP-binding</keyword>
<keyword id="KW-0963">Cytoplasm</keyword>
<keyword id="KW-0436">Ligase</keyword>
<keyword id="KW-0460">Magnesium</keyword>
<keyword id="KW-0479">Metal-binding</keyword>
<keyword id="KW-0547">Nucleotide-binding</keyword>
<keyword id="KW-0658">Purine biosynthesis</keyword>
<sequence length="735" mass="79792">MKPCNNIAITPELIAQHGLKNDEYQHILTLIGREPTFTELGIFSAMWNEHCSYKSSKKWLKTLPTKGNCVIQGPGENAGVVDIGEGQCVVFKMESHNHPSYIEPYQGAATGVGGILRDVFTMGARPIAAMNALRFGSPDHPRTRYLVAGVVSGIGGYSNAFGVPTVGGEINFDERYNGNILVNAFVAGIAKKDSIFYSKAQGVGLPVVYLGAKTGRDGVGGATMASAEFDDSISEKRPTVQVGDPFTEKCLLEACLELMELGAVVAIQDMGAAGLTSSAVEMGAKGDLGIKLNLDKVPVREENMTAYEMMLSESQERMLMVLKPELEKQASAIFHKWGLHFSIIGQTTDDLRFRVLHQGEEVVNLPIKELGNEAPVYDRPWSEPTPQPILKVEEVKKVENLGDVLLTLLNSAHQSSRRWVYEQYDTLIQGNTLVRPGADAGVIRVSSNDKRALAFSSDVTPRYCEADPYEGGKQAVAECWRNISTTGAMPLAATDNLNFGNPEKPEIMGQLVLAIKGIGEACRVLDFPIVSGNVSLYNETNGEAILPTPTIAGVGLLDDWSKMVTISGMQNGDSIVLIGDCGSHLGQSIYARNVLNINTGAPPHVDLQLEKKHGQFVRDVIHRGFVHAAHDISDGGLAIALAEMVIKAKKGIKAKLSNRLPHHAELFGEDQGRYLLSIKPYVLNHLKELAQVNAVSLTEIGRVEGNSLNIEGILTLSVDKLTQAYESWFPQFMGE</sequence>
<feature type="chain" id="PRO_0000100441" description="Phosphoribosylformylglycinamidine synthase subunit PurL">
    <location>
        <begin position="1"/>
        <end position="735"/>
    </location>
</feature>
<feature type="active site" evidence="1">
    <location>
        <position position="50"/>
    </location>
</feature>
<feature type="active site" description="Proton acceptor" evidence="1">
    <location>
        <position position="96"/>
    </location>
</feature>
<feature type="binding site" evidence="1">
    <location>
        <position position="53"/>
    </location>
    <ligand>
        <name>ATP</name>
        <dbReference type="ChEBI" id="CHEBI:30616"/>
    </ligand>
</feature>
<feature type="binding site" evidence="1">
    <location>
        <position position="92"/>
    </location>
    <ligand>
        <name>ATP</name>
        <dbReference type="ChEBI" id="CHEBI:30616"/>
    </ligand>
</feature>
<feature type="binding site" evidence="1">
    <location>
        <position position="94"/>
    </location>
    <ligand>
        <name>Mg(2+)</name>
        <dbReference type="ChEBI" id="CHEBI:18420"/>
        <label>1</label>
    </ligand>
</feature>
<feature type="binding site" evidence="1">
    <location>
        <begin position="95"/>
        <end position="98"/>
    </location>
    <ligand>
        <name>substrate</name>
    </ligand>
</feature>
<feature type="binding site" evidence="1">
    <location>
        <position position="117"/>
    </location>
    <ligand>
        <name>substrate</name>
    </ligand>
</feature>
<feature type="binding site" evidence="1">
    <location>
        <position position="118"/>
    </location>
    <ligand>
        <name>Mg(2+)</name>
        <dbReference type="ChEBI" id="CHEBI:18420"/>
        <label>2</label>
    </ligand>
</feature>
<feature type="binding site" evidence="1">
    <location>
        <position position="241"/>
    </location>
    <ligand>
        <name>substrate</name>
    </ligand>
</feature>
<feature type="binding site" evidence="1">
    <location>
        <position position="269"/>
    </location>
    <ligand>
        <name>Mg(2+)</name>
        <dbReference type="ChEBI" id="CHEBI:18420"/>
        <label>2</label>
    </ligand>
</feature>
<feature type="binding site" evidence="1">
    <location>
        <begin position="313"/>
        <end position="315"/>
    </location>
    <ligand>
        <name>substrate</name>
    </ligand>
</feature>
<feature type="binding site" evidence="1">
    <location>
        <position position="495"/>
    </location>
    <ligand>
        <name>ATP</name>
        <dbReference type="ChEBI" id="CHEBI:30616"/>
    </ligand>
</feature>
<feature type="binding site" evidence="1">
    <location>
        <position position="532"/>
    </location>
    <ligand>
        <name>ATP</name>
        <dbReference type="ChEBI" id="CHEBI:30616"/>
    </ligand>
</feature>
<feature type="binding site" evidence="1">
    <location>
        <position position="533"/>
    </location>
    <ligand>
        <name>Mg(2+)</name>
        <dbReference type="ChEBI" id="CHEBI:18420"/>
        <label>1</label>
    </ligand>
</feature>
<feature type="binding site" evidence="1">
    <location>
        <position position="535"/>
    </location>
    <ligand>
        <name>substrate</name>
    </ligand>
</feature>
<accession>Q6G335</accession>
<evidence type="ECO:0000255" key="1">
    <source>
        <dbReference type="HAMAP-Rule" id="MF_00420"/>
    </source>
</evidence>